<organism>
    <name type="scientific">Halorhodospira halophila (strain DSM 244 / SL1)</name>
    <name type="common">Ectothiorhodospira halophila (strain DSM 244 / SL1)</name>
    <dbReference type="NCBI Taxonomy" id="349124"/>
    <lineage>
        <taxon>Bacteria</taxon>
        <taxon>Pseudomonadati</taxon>
        <taxon>Pseudomonadota</taxon>
        <taxon>Gammaproteobacteria</taxon>
        <taxon>Chromatiales</taxon>
        <taxon>Ectothiorhodospiraceae</taxon>
        <taxon>Halorhodospira</taxon>
    </lineage>
</organism>
<protein>
    <recommendedName>
        <fullName evidence="1">Co-chaperonin GroES</fullName>
    </recommendedName>
    <alternativeName>
        <fullName evidence="1">10 kDa chaperonin</fullName>
    </alternativeName>
    <alternativeName>
        <fullName evidence="1">Chaperonin-10</fullName>
        <shortName evidence="1">Cpn10</shortName>
    </alternativeName>
</protein>
<dbReference type="EMBL" id="CP000544">
    <property type="protein sequence ID" value="ABM63103.1"/>
    <property type="molecule type" value="Genomic_DNA"/>
</dbReference>
<dbReference type="RefSeq" id="WP_011815125.1">
    <property type="nucleotide sequence ID" value="NC_008789.1"/>
</dbReference>
<dbReference type="SMR" id="A1WZJ1"/>
<dbReference type="STRING" id="349124.Hhal_2340"/>
<dbReference type="KEGG" id="hha:Hhal_2340"/>
<dbReference type="eggNOG" id="COG0234">
    <property type="taxonomic scope" value="Bacteria"/>
</dbReference>
<dbReference type="HOGENOM" id="CLU_132825_2_0_6"/>
<dbReference type="OrthoDB" id="9806791at2"/>
<dbReference type="Proteomes" id="UP000000647">
    <property type="component" value="Chromosome"/>
</dbReference>
<dbReference type="GO" id="GO:0005737">
    <property type="term" value="C:cytoplasm"/>
    <property type="evidence" value="ECO:0007669"/>
    <property type="project" value="UniProtKB-SubCell"/>
</dbReference>
<dbReference type="GO" id="GO:0005524">
    <property type="term" value="F:ATP binding"/>
    <property type="evidence" value="ECO:0007669"/>
    <property type="project" value="InterPro"/>
</dbReference>
<dbReference type="GO" id="GO:0046872">
    <property type="term" value="F:metal ion binding"/>
    <property type="evidence" value="ECO:0007669"/>
    <property type="project" value="TreeGrafter"/>
</dbReference>
<dbReference type="GO" id="GO:0044183">
    <property type="term" value="F:protein folding chaperone"/>
    <property type="evidence" value="ECO:0007669"/>
    <property type="project" value="InterPro"/>
</dbReference>
<dbReference type="GO" id="GO:0051087">
    <property type="term" value="F:protein-folding chaperone binding"/>
    <property type="evidence" value="ECO:0007669"/>
    <property type="project" value="TreeGrafter"/>
</dbReference>
<dbReference type="GO" id="GO:0051082">
    <property type="term" value="F:unfolded protein binding"/>
    <property type="evidence" value="ECO:0007669"/>
    <property type="project" value="TreeGrafter"/>
</dbReference>
<dbReference type="GO" id="GO:0051085">
    <property type="term" value="P:chaperone cofactor-dependent protein refolding"/>
    <property type="evidence" value="ECO:0007669"/>
    <property type="project" value="TreeGrafter"/>
</dbReference>
<dbReference type="CDD" id="cd00320">
    <property type="entry name" value="cpn10"/>
    <property type="match status" value="1"/>
</dbReference>
<dbReference type="FunFam" id="2.30.33.40:FF:000001">
    <property type="entry name" value="10 kDa chaperonin"/>
    <property type="match status" value="1"/>
</dbReference>
<dbReference type="Gene3D" id="2.30.33.40">
    <property type="entry name" value="GroES chaperonin"/>
    <property type="match status" value="1"/>
</dbReference>
<dbReference type="HAMAP" id="MF_00580">
    <property type="entry name" value="CH10"/>
    <property type="match status" value="1"/>
</dbReference>
<dbReference type="InterPro" id="IPR020818">
    <property type="entry name" value="Chaperonin_GroES"/>
</dbReference>
<dbReference type="InterPro" id="IPR037124">
    <property type="entry name" value="Chaperonin_GroES_sf"/>
</dbReference>
<dbReference type="InterPro" id="IPR018369">
    <property type="entry name" value="Chaprnonin_Cpn10_CS"/>
</dbReference>
<dbReference type="InterPro" id="IPR011032">
    <property type="entry name" value="GroES-like_sf"/>
</dbReference>
<dbReference type="NCBIfam" id="NF001527">
    <property type="entry name" value="PRK00364.1-2"/>
    <property type="match status" value="1"/>
</dbReference>
<dbReference type="NCBIfam" id="NF001531">
    <property type="entry name" value="PRK00364.2-2"/>
    <property type="match status" value="1"/>
</dbReference>
<dbReference type="NCBIfam" id="NF001533">
    <property type="entry name" value="PRK00364.2-4"/>
    <property type="match status" value="1"/>
</dbReference>
<dbReference type="NCBIfam" id="NF001534">
    <property type="entry name" value="PRK00364.2-5"/>
    <property type="match status" value="1"/>
</dbReference>
<dbReference type="PANTHER" id="PTHR10772">
    <property type="entry name" value="10 KDA HEAT SHOCK PROTEIN"/>
    <property type="match status" value="1"/>
</dbReference>
<dbReference type="PANTHER" id="PTHR10772:SF58">
    <property type="entry name" value="CO-CHAPERONIN GROES"/>
    <property type="match status" value="1"/>
</dbReference>
<dbReference type="Pfam" id="PF00166">
    <property type="entry name" value="Cpn10"/>
    <property type="match status" value="1"/>
</dbReference>
<dbReference type="PRINTS" id="PR00297">
    <property type="entry name" value="CHAPERONIN10"/>
</dbReference>
<dbReference type="SMART" id="SM00883">
    <property type="entry name" value="Cpn10"/>
    <property type="match status" value="1"/>
</dbReference>
<dbReference type="SUPFAM" id="SSF50129">
    <property type="entry name" value="GroES-like"/>
    <property type="match status" value="1"/>
</dbReference>
<dbReference type="PROSITE" id="PS00681">
    <property type="entry name" value="CHAPERONINS_CPN10"/>
    <property type="match status" value="1"/>
</dbReference>
<sequence length="96" mass="10590">MSIRPLHDRVVIQRLEEERTSPGGIVIPDTAAEKPMKGKVIAVGHGKTLDNGERRPVEVNVGDQVLFGKYAGTEVKIDGQDYLVMREDDIMAVFEG</sequence>
<accession>A1WZJ1</accession>
<proteinExistence type="inferred from homology"/>
<gene>
    <name evidence="1" type="primary">groES</name>
    <name evidence="1" type="synonym">groS</name>
    <name type="ordered locus">Hhal_2340</name>
</gene>
<comment type="function">
    <text evidence="1">Together with the chaperonin GroEL, plays an essential role in assisting protein folding. The GroEL-GroES system forms a nano-cage that allows encapsulation of the non-native substrate proteins and provides a physical environment optimized to promote and accelerate protein folding. GroES binds to the apical surface of the GroEL ring, thereby capping the opening of the GroEL channel.</text>
</comment>
<comment type="subunit">
    <text evidence="1">Heptamer of 7 subunits arranged in a ring. Interacts with the chaperonin GroEL.</text>
</comment>
<comment type="subcellular location">
    <subcellularLocation>
        <location evidence="1">Cytoplasm</location>
    </subcellularLocation>
</comment>
<comment type="similarity">
    <text evidence="1">Belongs to the GroES chaperonin family.</text>
</comment>
<feature type="chain" id="PRO_1000025271" description="Co-chaperonin GroES">
    <location>
        <begin position="1"/>
        <end position="96"/>
    </location>
</feature>
<reference key="1">
    <citation type="submission" date="2006-12" db="EMBL/GenBank/DDBJ databases">
        <title>Complete sequence of Halorhodospira halophila SL1.</title>
        <authorList>
            <consortium name="US DOE Joint Genome Institute"/>
            <person name="Copeland A."/>
            <person name="Lucas S."/>
            <person name="Lapidus A."/>
            <person name="Barry K."/>
            <person name="Detter J.C."/>
            <person name="Glavina del Rio T."/>
            <person name="Hammon N."/>
            <person name="Israni S."/>
            <person name="Dalin E."/>
            <person name="Tice H."/>
            <person name="Pitluck S."/>
            <person name="Saunders E."/>
            <person name="Brettin T."/>
            <person name="Bruce D."/>
            <person name="Han C."/>
            <person name="Tapia R."/>
            <person name="Schmutz J."/>
            <person name="Larimer F."/>
            <person name="Land M."/>
            <person name="Hauser L."/>
            <person name="Kyrpides N."/>
            <person name="Mikhailova N."/>
            <person name="Hoff W."/>
            <person name="Richardson P."/>
        </authorList>
    </citation>
    <scope>NUCLEOTIDE SEQUENCE [LARGE SCALE GENOMIC DNA]</scope>
    <source>
        <strain>DSM 244 / SL1</strain>
    </source>
</reference>
<name>CH10_HALHL</name>
<keyword id="KW-0143">Chaperone</keyword>
<keyword id="KW-0963">Cytoplasm</keyword>
<keyword id="KW-1185">Reference proteome</keyword>
<evidence type="ECO:0000255" key="1">
    <source>
        <dbReference type="HAMAP-Rule" id="MF_00580"/>
    </source>
</evidence>